<proteinExistence type="evidence at protein level"/>
<sequence>MALLVRVLRNQTSISQWVPVCSRLIPVSPTQGQGDRALSRTSQWPQMSQSRACGGSEQIPGIDIQLNRKYHTTRKLSTTKDSPQPVEEKVGAFTKIIEAMGFTGPLKYSKWKIKIAALRMYTSCVEKTDFEEFFLRCQMPDTFNSWFLITLLHVWMCLVRMKQEGRSGKYMCRIIVHFMWEDVQQRGRVMGVNPYILKKNMILMTNHFYAAILGYDEGILSDDHGLAAALWRTFFNRKCEDPRHLELLVEYVRKQIQYLDSMNGEDLLLTGEVSWRPLVEKNPQSILKPHSPTYNDEGL</sequence>
<feature type="chain" id="PRO_0000206560" description="Ubiquinol-cytochrome c reductase complex assembly factor 1">
    <location>
        <begin position="1"/>
        <end position="299"/>
    </location>
</feature>
<feature type="splice variant" id="VSP_000855" description="In isoform 3." evidence="9">
    <location>
        <begin position="1"/>
        <end position="112"/>
    </location>
</feature>
<feature type="splice variant" id="VSP_043406" description="In isoform 5." evidence="8">
    <location>
        <begin position="44"/>
        <end position="111"/>
    </location>
</feature>
<feature type="splice variant" id="VSP_016027" description="In isoform 4." evidence="10">
    <location>
        <begin position="109"/>
        <end position="135"/>
    </location>
</feature>
<feature type="splice variant" id="VSP_000856" description="In isoform 3." evidence="9">
    <original>IKIAALRMYTSCVEKTDFEEFFLR</original>
    <variation>MQPIDTCVSYPRTGSVSHFPG</variation>
    <location>
        <begin position="113"/>
        <end position="136"/>
    </location>
</feature>
<feature type="splice variant" id="VSP_000857" description="In isoform 2." evidence="8">
    <location>
        <begin position="192"/>
        <end position="217"/>
    </location>
</feature>
<feature type="sequence variant" id="VAR_036612" description="In a breast cancer sample; somatic mutation." evidence="5">
    <original>W</original>
    <variation>S</variation>
    <location>
        <position position="44"/>
    </location>
</feature>
<feature type="sequence variant" id="VAR_028047" description="In dbSNP:rs4911494." evidence="3 4 7">
    <original>R</original>
    <variation>Q</variation>
    <location>
        <position position="51"/>
    </location>
</feature>
<feature type="sequence variant" id="VAR_028048" description="In dbSNP:rs6088810.">
    <original>P</original>
    <variation>L</variation>
    <location>
        <position position="85"/>
    </location>
</feature>
<feature type="sequence conflict" description="In Ref. 2; BAB14217 and 4; BC008871." evidence="11" ref="2 4">
    <original>F</original>
    <variation>L</variation>
    <location>
        <position position="134"/>
    </location>
</feature>
<feature type="sequence conflict" description="In Ref. 2; BAB14217." evidence="11" ref="2">
    <original>LR</original>
    <variation>MG</variation>
    <location>
        <begin position="135"/>
        <end position="136"/>
    </location>
</feature>
<reference key="1">
    <citation type="submission" date="2001-08" db="EMBL/GenBank/DDBJ databases">
        <title>cDNA encoding the ortholog of the yeast mitochondrial CBP3 gene.</title>
        <authorList>
            <person name="Petruzzella V."/>
            <person name="Patrono C."/>
            <person name="Zeviani M."/>
        </authorList>
    </citation>
    <scope>NUCLEOTIDE SEQUENCE [MRNA] (ISOFORM 1)</scope>
    <scope>NUCLEOTIDE SEQUENCE [MRNA] OF 7-266 (ISOFORM 4)</scope>
    <scope>VARIANT GLN-51</scope>
</reference>
<reference key="2">
    <citation type="journal article" date="2004" name="Nat. Genet.">
        <title>Complete sequencing and characterization of 21,243 full-length human cDNAs.</title>
        <authorList>
            <person name="Ota T."/>
            <person name="Suzuki Y."/>
            <person name="Nishikawa T."/>
            <person name="Otsuki T."/>
            <person name="Sugiyama T."/>
            <person name="Irie R."/>
            <person name="Wakamatsu A."/>
            <person name="Hayashi K."/>
            <person name="Sato H."/>
            <person name="Nagai K."/>
            <person name="Kimura K."/>
            <person name="Makita H."/>
            <person name="Sekine M."/>
            <person name="Obayashi M."/>
            <person name="Nishi T."/>
            <person name="Shibahara T."/>
            <person name="Tanaka T."/>
            <person name="Ishii S."/>
            <person name="Yamamoto J."/>
            <person name="Saito K."/>
            <person name="Kawai Y."/>
            <person name="Isono Y."/>
            <person name="Nakamura Y."/>
            <person name="Nagahari K."/>
            <person name="Murakami K."/>
            <person name="Yasuda T."/>
            <person name="Iwayanagi T."/>
            <person name="Wagatsuma M."/>
            <person name="Shiratori A."/>
            <person name="Sudo H."/>
            <person name="Hosoiri T."/>
            <person name="Kaku Y."/>
            <person name="Kodaira H."/>
            <person name="Kondo H."/>
            <person name="Sugawara M."/>
            <person name="Takahashi M."/>
            <person name="Kanda K."/>
            <person name="Yokoi T."/>
            <person name="Furuya T."/>
            <person name="Kikkawa E."/>
            <person name="Omura Y."/>
            <person name="Abe K."/>
            <person name="Kamihara K."/>
            <person name="Katsuta N."/>
            <person name="Sato K."/>
            <person name="Tanikawa M."/>
            <person name="Yamazaki M."/>
            <person name="Ninomiya K."/>
            <person name="Ishibashi T."/>
            <person name="Yamashita H."/>
            <person name="Murakawa K."/>
            <person name="Fujimori K."/>
            <person name="Tanai H."/>
            <person name="Kimata M."/>
            <person name="Watanabe M."/>
            <person name="Hiraoka S."/>
            <person name="Chiba Y."/>
            <person name="Ishida S."/>
            <person name="Ono Y."/>
            <person name="Takiguchi S."/>
            <person name="Watanabe S."/>
            <person name="Yosida M."/>
            <person name="Hotuta T."/>
            <person name="Kusano J."/>
            <person name="Kanehori K."/>
            <person name="Takahashi-Fujii A."/>
            <person name="Hara H."/>
            <person name="Tanase T.-O."/>
            <person name="Nomura Y."/>
            <person name="Togiya S."/>
            <person name="Komai F."/>
            <person name="Hara R."/>
            <person name="Takeuchi K."/>
            <person name="Arita M."/>
            <person name="Imose N."/>
            <person name="Musashino K."/>
            <person name="Yuuki H."/>
            <person name="Oshima A."/>
            <person name="Sasaki N."/>
            <person name="Aotsuka S."/>
            <person name="Yoshikawa Y."/>
            <person name="Matsunawa H."/>
            <person name="Ichihara T."/>
            <person name="Shiohata N."/>
            <person name="Sano S."/>
            <person name="Moriya S."/>
            <person name="Momiyama H."/>
            <person name="Satoh N."/>
            <person name="Takami S."/>
            <person name="Terashima Y."/>
            <person name="Suzuki O."/>
            <person name="Nakagawa S."/>
            <person name="Senoh A."/>
            <person name="Mizoguchi H."/>
            <person name="Goto Y."/>
            <person name="Shimizu F."/>
            <person name="Wakebe H."/>
            <person name="Hishigaki H."/>
            <person name="Watanabe T."/>
            <person name="Sugiyama A."/>
            <person name="Takemoto M."/>
            <person name="Kawakami B."/>
            <person name="Yamazaki M."/>
            <person name="Watanabe K."/>
            <person name="Kumagai A."/>
            <person name="Itakura S."/>
            <person name="Fukuzumi Y."/>
            <person name="Fujimori Y."/>
            <person name="Komiyama M."/>
            <person name="Tashiro H."/>
            <person name="Tanigami A."/>
            <person name="Fujiwara T."/>
            <person name="Ono T."/>
            <person name="Yamada K."/>
            <person name="Fujii Y."/>
            <person name="Ozaki K."/>
            <person name="Hirao M."/>
            <person name="Ohmori Y."/>
            <person name="Kawabata A."/>
            <person name="Hikiji T."/>
            <person name="Kobatake N."/>
            <person name="Inagaki H."/>
            <person name="Ikema Y."/>
            <person name="Okamoto S."/>
            <person name="Okitani R."/>
            <person name="Kawakami T."/>
            <person name="Noguchi S."/>
            <person name="Itoh T."/>
            <person name="Shigeta K."/>
            <person name="Senba T."/>
            <person name="Matsumura K."/>
            <person name="Nakajima Y."/>
            <person name="Mizuno T."/>
            <person name="Morinaga M."/>
            <person name="Sasaki M."/>
            <person name="Togashi T."/>
            <person name="Oyama M."/>
            <person name="Hata H."/>
            <person name="Watanabe M."/>
            <person name="Komatsu T."/>
            <person name="Mizushima-Sugano J."/>
            <person name="Satoh T."/>
            <person name="Shirai Y."/>
            <person name="Takahashi Y."/>
            <person name="Nakagawa K."/>
            <person name="Okumura K."/>
            <person name="Nagase T."/>
            <person name="Nomura N."/>
            <person name="Kikuchi H."/>
            <person name="Masuho Y."/>
            <person name="Yamashita R."/>
            <person name="Nakai K."/>
            <person name="Yada T."/>
            <person name="Nakamura Y."/>
            <person name="Ohara O."/>
            <person name="Isogai T."/>
            <person name="Sugano S."/>
        </authorList>
    </citation>
    <scope>NUCLEOTIDE SEQUENCE [LARGE SCALE MRNA] (ISOFORMS 1; 2 AND 5)</scope>
    <scope>VARIANT GLN-51</scope>
    <source>
        <tissue>Cerebellum</tissue>
        <tissue>Teratocarcinoma</tissue>
    </source>
</reference>
<reference key="3">
    <citation type="journal article" date="2001" name="Nature">
        <title>The DNA sequence and comparative analysis of human chromosome 20.</title>
        <authorList>
            <person name="Deloukas P."/>
            <person name="Matthews L.H."/>
            <person name="Ashurst J.L."/>
            <person name="Burton J."/>
            <person name="Gilbert J.G.R."/>
            <person name="Jones M."/>
            <person name="Stavrides G."/>
            <person name="Almeida J.P."/>
            <person name="Babbage A.K."/>
            <person name="Bagguley C.L."/>
            <person name="Bailey J."/>
            <person name="Barlow K.F."/>
            <person name="Bates K.N."/>
            <person name="Beard L.M."/>
            <person name="Beare D.M."/>
            <person name="Beasley O.P."/>
            <person name="Bird C.P."/>
            <person name="Blakey S.E."/>
            <person name="Bridgeman A.M."/>
            <person name="Brown A.J."/>
            <person name="Buck D."/>
            <person name="Burrill W.D."/>
            <person name="Butler A.P."/>
            <person name="Carder C."/>
            <person name="Carter N.P."/>
            <person name="Chapman J.C."/>
            <person name="Clamp M."/>
            <person name="Clark G."/>
            <person name="Clark L.N."/>
            <person name="Clark S.Y."/>
            <person name="Clee C.M."/>
            <person name="Clegg S."/>
            <person name="Cobley V.E."/>
            <person name="Collier R.E."/>
            <person name="Connor R.E."/>
            <person name="Corby N.R."/>
            <person name="Coulson A."/>
            <person name="Coville G.J."/>
            <person name="Deadman R."/>
            <person name="Dhami P.D."/>
            <person name="Dunn M."/>
            <person name="Ellington A.G."/>
            <person name="Frankland J.A."/>
            <person name="Fraser A."/>
            <person name="French L."/>
            <person name="Garner P."/>
            <person name="Grafham D.V."/>
            <person name="Griffiths C."/>
            <person name="Griffiths M.N.D."/>
            <person name="Gwilliam R."/>
            <person name="Hall R.E."/>
            <person name="Hammond S."/>
            <person name="Harley J.L."/>
            <person name="Heath P.D."/>
            <person name="Ho S."/>
            <person name="Holden J.L."/>
            <person name="Howden P.J."/>
            <person name="Huckle E."/>
            <person name="Hunt A.R."/>
            <person name="Hunt S.E."/>
            <person name="Jekosch K."/>
            <person name="Johnson C.M."/>
            <person name="Johnson D."/>
            <person name="Kay M.P."/>
            <person name="Kimberley A.M."/>
            <person name="King A."/>
            <person name="Knights A."/>
            <person name="Laird G.K."/>
            <person name="Lawlor S."/>
            <person name="Lehvaeslaiho M.H."/>
            <person name="Leversha M.A."/>
            <person name="Lloyd C."/>
            <person name="Lloyd D.M."/>
            <person name="Lovell J.D."/>
            <person name="Marsh V.L."/>
            <person name="Martin S.L."/>
            <person name="McConnachie L.J."/>
            <person name="McLay K."/>
            <person name="McMurray A.A."/>
            <person name="Milne S.A."/>
            <person name="Mistry D."/>
            <person name="Moore M.J.F."/>
            <person name="Mullikin J.C."/>
            <person name="Nickerson T."/>
            <person name="Oliver K."/>
            <person name="Parker A."/>
            <person name="Patel R."/>
            <person name="Pearce T.A.V."/>
            <person name="Peck A.I."/>
            <person name="Phillimore B.J.C.T."/>
            <person name="Prathalingam S.R."/>
            <person name="Plumb R.W."/>
            <person name="Ramsay H."/>
            <person name="Rice C.M."/>
            <person name="Ross M.T."/>
            <person name="Scott C.E."/>
            <person name="Sehra H.K."/>
            <person name="Shownkeen R."/>
            <person name="Sims S."/>
            <person name="Skuce C.D."/>
            <person name="Smith M.L."/>
            <person name="Soderlund C."/>
            <person name="Steward C.A."/>
            <person name="Sulston J.E."/>
            <person name="Swann R.M."/>
            <person name="Sycamore N."/>
            <person name="Taylor R."/>
            <person name="Tee L."/>
            <person name="Thomas D.W."/>
            <person name="Thorpe A."/>
            <person name="Tracey A."/>
            <person name="Tromans A.C."/>
            <person name="Vaudin M."/>
            <person name="Wall M."/>
            <person name="Wallis J.M."/>
            <person name="Whitehead S.L."/>
            <person name="Whittaker P."/>
            <person name="Willey D.L."/>
            <person name="Williams L."/>
            <person name="Williams S.A."/>
            <person name="Wilming L."/>
            <person name="Wray P.W."/>
            <person name="Hubbard T."/>
            <person name="Durbin R.M."/>
            <person name="Bentley D.R."/>
            <person name="Beck S."/>
            <person name="Rogers J."/>
        </authorList>
    </citation>
    <scope>NUCLEOTIDE SEQUENCE [LARGE SCALE GENOMIC DNA]</scope>
</reference>
<reference key="4">
    <citation type="journal article" date="2004" name="Genome Res.">
        <title>The status, quality, and expansion of the NIH full-length cDNA project: the Mammalian Gene Collection (MGC).</title>
        <authorList>
            <consortium name="The MGC Project Team"/>
        </authorList>
    </citation>
    <scope>NUCLEOTIDE SEQUENCE [LARGE SCALE MRNA] (ISOFORMS 1 AND 3)</scope>
    <scope>VARIANT GLN-51</scope>
    <source>
        <tissue>Brain</tissue>
    </source>
</reference>
<reference key="5">
    <citation type="journal article" date="2011" name="BMC Syst. Biol.">
        <title>Initial characterization of the human central proteome.</title>
        <authorList>
            <person name="Burkard T.R."/>
            <person name="Planyavsky M."/>
            <person name="Kaupe I."/>
            <person name="Breitwieser F.P."/>
            <person name="Buerckstuemmer T."/>
            <person name="Bennett K.L."/>
            <person name="Superti-Furga G."/>
            <person name="Colinge J."/>
        </authorList>
    </citation>
    <scope>IDENTIFICATION BY MASS SPECTROMETRY [LARGE SCALE ANALYSIS]</scope>
</reference>
<reference key="6">
    <citation type="journal article" date="2015" name="Proteomics">
        <title>N-terminome analysis of the human mitochondrial proteome.</title>
        <authorList>
            <person name="Vaca Jacome A.S."/>
            <person name="Rabilloud T."/>
            <person name="Schaeffer-Reiss C."/>
            <person name="Rompais M."/>
            <person name="Ayoub D."/>
            <person name="Lane L."/>
            <person name="Bairoch A."/>
            <person name="Van Dorsselaer A."/>
            <person name="Carapito C."/>
        </authorList>
    </citation>
    <scope>IDENTIFICATION BY MASS SPECTROMETRY [LARGE SCALE ANALYSIS]</scope>
</reference>
<reference key="7">
    <citation type="journal article" date="2006" name="Science">
        <title>The consensus coding sequences of human breast and colorectal cancers.</title>
        <authorList>
            <person name="Sjoeblom T."/>
            <person name="Jones S."/>
            <person name="Wood L.D."/>
            <person name="Parsons D.W."/>
            <person name="Lin J."/>
            <person name="Barber T.D."/>
            <person name="Mandelker D."/>
            <person name="Leary R.J."/>
            <person name="Ptak J."/>
            <person name="Silliman N."/>
            <person name="Szabo S."/>
            <person name="Buckhaults P."/>
            <person name="Farrell C."/>
            <person name="Meeh P."/>
            <person name="Markowitz S.D."/>
            <person name="Willis J."/>
            <person name="Dawson D."/>
            <person name="Willson J.K.V."/>
            <person name="Gazdar A.F."/>
            <person name="Hartigan J."/>
            <person name="Wu L."/>
            <person name="Liu C."/>
            <person name="Parmigiani G."/>
            <person name="Park B.H."/>
            <person name="Bachman K.E."/>
            <person name="Papadopoulos N."/>
            <person name="Vogelstein B."/>
            <person name="Kinzler K.W."/>
            <person name="Velculescu V.E."/>
        </authorList>
    </citation>
    <scope>VARIANT [LARGE SCALE ANALYSIS] SER-44</scope>
</reference>
<reference key="8">
    <citation type="journal article" date="2013" name="PLoS Genet.">
        <title>Mutations in the UQCC1-interacting protein, UQCC2, cause human complex III deficiency associated with perturbed cytochrome b protein expression.</title>
        <authorList>
            <person name="Tucker E.J."/>
            <person name="Wanschers B.F."/>
            <person name="Szklarczyk R."/>
            <person name="Mountford H.S."/>
            <person name="Wijeyeratne X.W."/>
            <person name="van den Brand M.A."/>
            <person name="Leenders A.M."/>
            <person name="Rodenburg R.J."/>
            <person name="Reljic B."/>
            <person name="Compton A.G."/>
            <person name="Frazier A.E."/>
            <person name="Bruno D.L."/>
            <person name="Christodoulou J."/>
            <person name="Endo H."/>
            <person name="Ryan M.T."/>
            <person name="Nijtmans L.G."/>
            <person name="Huynen M.A."/>
            <person name="Thorburn D.R."/>
        </authorList>
    </citation>
    <scope>FUNCTION</scope>
    <scope>INTERACTION WITH UQCC2</scope>
    <scope>SUBCELLULAR LOCATION</scope>
</reference>
<organism>
    <name type="scientific">Homo sapiens</name>
    <name type="common">Human</name>
    <dbReference type="NCBI Taxonomy" id="9606"/>
    <lineage>
        <taxon>Eukaryota</taxon>
        <taxon>Metazoa</taxon>
        <taxon>Chordata</taxon>
        <taxon>Craniata</taxon>
        <taxon>Vertebrata</taxon>
        <taxon>Euteleostomi</taxon>
        <taxon>Mammalia</taxon>
        <taxon>Eutheria</taxon>
        <taxon>Euarchontoglires</taxon>
        <taxon>Primates</taxon>
        <taxon>Haplorrhini</taxon>
        <taxon>Catarrhini</taxon>
        <taxon>Hominidae</taxon>
        <taxon>Homo</taxon>
    </lineage>
</organism>
<accession>Q9NVA1</accession>
<accession>B1AKV5</accession>
<accession>Q0VF37</accession>
<accession>Q5T348</accession>
<accession>Q5T351</accession>
<accession>Q5T353</accession>
<accession>Q86YU3</accession>
<accession>Q86YU4</accession>
<accession>Q96H66</accession>
<accession>Q9H438</accession>
<accession>Q9H452</accession>
<accession>Q9H9K8</accession>
<accession>Q9H9R5</accession>
<name>UQCC1_HUMAN</name>
<evidence type="ECO:0000250" key="1"/>
<evidence type="ECO:0000250" key="2">
    <source>
        <dbReference type="UniProtKB" id="Q9CWU6"/>
    </source>
</evidence>
<evidence type="ECO:0000269" key="3">
    <source>
    </source>
</evidence>
<evidence type="ECO:0000269" key="4">
    <source>
    </source>
</evidence>
<evidence type="ECO:0000269" key="5">
    <source>
    </source>
</evidence>
<evidence type="ECO:0000269" key="6">
    <source>
    </source>
</evidence>
<evidence type="ECO:0000269" key="7">
    <source ref="1"/>
</evidence>
<evidence type="ECO:0000303" key="8">
    <source>
    </source>
</evidence>
<evidence type="ECO:0000303" key="9">
    <source>
    </source>
</evidence>
<evidence type="ECO:0000303" key="10">
    <source ref="1"/>
</evidence>
<evidence type="ECO:0000305" key="11"/>
<comment type="function">
    <text evidence="6">Required for the assembly of the ubiquinol-cytochrome c reductase complex (mitochondrial respiratory chain complex III or cytochrome b-c1 complex). Involved in cytochrome b translation and/or stability.</text>
</comment>
<comment type="subunit">
    <text evidence="2 6">Interacts with UQCC2 (PubMed:24385928). Interacts with UQCC3. Forms a complex, named COMB/coordinator of mitochondrial CYTB biogenesis, composed of UQCC1, UQCC2, UQCC4, UQCC5 and UQCC6; stabilizes nascent cytochrome b/MT-CYB and promotes its membrane insertion. Forms a complex, named COMB/coordinator of mitochondrial CYTB biogenesis, composed of UQCC1, UQCC2, UQCC4, UQCC5 and UQCC6; stabilizes nascent cytochrome b/MT-CYB and promotes its membrane insertion. Forms a complex, named COMA, composed of UQCC1, UQCC2 and UQCC4; activates MT-CYB translation. Forms a complex, named COMC, composed of UQCC1, UQCC2; UQCC3 and UQCC4; mediates MT-CYB hemylation and association with the first nuclear-encoded CIII subunit UQCRQ (By similarity).</text>
</comment>
<comment type="interaction">
    <interactant intactId="EBI-11911675">
        <id>Q9NVA1</id>
    </interactant>
    <interactant intactId="EBI-11954292">
        <id>Q86V38</id>
        <label>ATN1</label>
    </interactant>
    <organismsDiffer>false</organismsDiffer>
    <experiments>3</experiments>
</comment>
<comment type="interaction">
    <interactant intactId="EBI-11911675">
        <id>Q9NVA1</id>
    </interactant>
    <interactant intactId="EBI-6875961">
        <id>P02489</id>
        <label>CRYAA</label>
    </interactant>
    <organismsDiffer>false</organismsDiffer>
    <experiments>3</experiments>
</comment>
<comment type="interaction">
    <interactant intactId="EBI-11911675">
        <id>Q9NVA1</id>
    </interactant>
    <interactant intactId="EBI-2432309">
        <id>Q92876</id>
        <label>KLK6</label>
    </interactant>
    <organismsDiffer>false</organismsDiffer>
    <experiments>3</experiments>
</comment>
<comment type="interaction">
    <interactant intactId="EBI-11911675">
        <id>Q9NVA1</id>
    </interactant>
    <interactant intactId="EBI-1054584">
        <id>Q9BRT2</id>
        <label>UQCC2</label>
    </interactant>
    <organismsDiffer>false</organismsDiffer>
    <experiments>2</experiments>
</comment>
<comment type="subcellular location">
    <subcellularLocation>
        <location evidence="6">Mitochondrion inner membrane</location>
    </subcellularLocation>
    <subcellularLocation>
        <location evidence="1">Cytoplasmic vesicle</location>
    </subcellularLocation>
    <text evidence="1">Cytoplasmic vesicular structures.</text>
</comment>
<comment type="alternative products">
    <event type="alternative splicing"/>
    <isoform>
        <id>Q9NVA1-1</id>
        <name>1</name>
        <sequence type="displayed"/>
    </isoform>
    <isoform>
        <id>Q9NVA1-2</id>
        <name>2</name>
        <sequence type="described" ref="VSP_000857"/>
    </isoform>
    <isoform>
        <id>Q9NVA1-3</id>
        <name>3</name>
        <sequence type="described" ref="VSP_000855 VSP_000856"/>
    </isoform>
    <isoform>
        <id>Q9NVA1-4</id>
        <name>4</name>
        <sequence type="described" ref="VSP_016027"/>
    </isoform>
    <isoform>
        <id>Q9NVA1-5</id>
        <name>5</name>
        <sequence type="described" ref="VSP_043406"/>
    </isoform>
</comment>
<comment type="miscellaneous">
    <molecule>Isoform 4</molecule>
    <text evidence="11">May be due to a competing donor splice site.</text>
</comment>
<comment type="similarity">
    <text evidence="11">Belongs to the CBP3 family.</text>
</comment>
<comment type="sequence caution" evidence="11">
    <conflict type="erroneous initiation">
        <sequence resource="EMBL-CDS" id="AAL13119"/>
    </conflict>
    <text>Truncated N-terminus.</text>
</comment>
<comment type="sequence caution" evidence="11">
    <conflict type="erroneous termination">
        <sequence resource="EMBL-CDS" id="BAB14156"/>
    </conflict>
    <text>Truncated C-terminus.</text>
</comment>
<comment type="sequence caution" evidence="11">
    <conflict type="miscellaneous discrepancy">
        <sequence resource="EMBL-CDS" id="BAB14217"/>
    </conflict>
    <text>Erroneous CDS prediction.</text>
</comment>
<gene>
    <name type="primary">UQCC1</name>
    <name type="synonym">BZFB</name>
    <name type="synonym">C20orf44</name>
    <name type="synonym">UQCC</name>
</gene>
<dbReference type="EMBL" id="AY050659">
    <property type="protein sequence ID" value="AAL13118.1"/>
    <property type="molecule type" value="mRNA"/>
</dbReference>
<dbReference type="EMBL" id="AY050660">
    <property type="protein sequence ID" value="AAL13119.1"/>
    <property type="status" value="ALT_INIT"/>
    <property type="molecule type" value="mRNA"/>
</dbReference>
<dbReference type="EMBL" id="AK001712">
    <property type="protein sequence ID" value="BAA91854.1"/>
    <property type="molecule type" value="mRNA"/>
</dbReference>
<dbReference type="EMBL" id="AK022650">
    <property type="protein sequence ID" value="BAB14156.1"/>
    <property type="status" value="ALT_SEQ"/>
    <property type="molecule type" value="mRNA"/>
</dbReference>
<dbReference type="EMBL" id="AK022742">
    <property type="protein sequence ID" value="BAB14217.1"/>
    <property type="status" value="ALT_SEQ"/>
    <property type="molecule type" value="mRNA"/>
</dbReference>
<dbReference type="EMBL" id="AK293516">
    <property type="protein sequence ID" value="BAH11526.1"/>
    <property type="molecule type" value="mRNA"/>
</dbReference>
<dbReference type="EMBL" id="AL121752">
    <property type="status" value="NOT_ANNOTATED_CDS"/>
    <property type="molecule type" value="Genomic_DNA"/>
</dbReference>
<dbReference type="EMBL" id="AL121753">
    <property type="status" value="NOT_ANNOTATED_CDS"/>
    <property type="molecule type" value="Genomic_DNA"/>
</dbReference>
<dbReference type="EMBL" id="FO393401">
    <property type="status" value="NOT_ANNOTATED_CDS"/>
    <property type="molecule type" value="Genomic_DNA"/>
</dbReference>
<dbReference type="EMBL" id="BC008871">
    <property type="status" value="NOT_ANNOTATED_CDS"/>
    <property type="molecule type" value="mRNA"/>
</dbReference>
<dbReference type="EMBL" id="BC119013">
    <property type="protein sequence ID" value="AAI19014.1"/>
    <property type="molecule type" value="mRNA"/>
</dbReference>
<dbReference type="EMBL" id="BC122862">
    <property type="protein sequence ID" value="AAI22863.1"/>
    <property type="molecule type" value="mRNA"/>
</dbReference>
<dbReference type="CCDS" id="CCDS13252.1">
    <molecule id="Q9NVA1-1"/>
</dbReference>
<dbReference type="CCDS" id="CCDS13253.2">
    <molecule id="Q9NVA1-2"/>
</dbReference>
<dbReference type="CCDS" id="CCDS54458.1">
    <molecule id="Q9NVA1-5"/>
</dbReference>
<dbReference type="RefSeq" id="NP_001171906.1">
    <molecule id="Q9NVA1-5"/>
    <property type="nucleotide sequence ID" value="NM_001184977.2"/>
</dbReference>
<dbReference type="RefSeq" id="NP_060714.3">
    <molecule id="Q9NVA1-1"/>
    <property type="nucleotide sequence ID" value="NM_018244.4"/>
</dbReference>
<dbReference type="RefSeq" id="NP_955781.2">
    <molecule id="Q9NVA1-2"/>
    <property type="nucleotide sequence ID" value="NM_199487.3"/>
</dbReference>
<dbReference type="RefSeq" id="XP_011527184.1">
    <property type="nucleotide sequence ID" value="XM_011528882.1"/>
</dbReference>
<dbReference type="RefSeq" id="XP_011527185.1">
    <property type="nucleotide sequence ID" value="XM_011528883.1"/>
</dbReference>
<dbReference type="RefSeq" id="XP_011527186.1">
    <property type="nucleotide sequence ID" value="XM_011528884.1"/>
</dbReference>
<dbReference type="SMR" id="Q9NVA1"/>
<dbReference type="BioGRID" id="120536">
    <property type="interactions" value="117"/>
</dbReference>
<dbReference type="FunCoup" id="Q9NVA1">
    <property type="interactions" value="1469"/>
</dbReference>
<dbReference type="IntAct" id="Q9NVA1">
    <property type="interactions" value="75"/>
</dbReference>
<dbReference type="STRING" id="9606.ENSP00000363506"/>
<dbReference type="GlyGen" id="Q9NVA1">
    <property type="glycosylation" value="2 sites, 1 O-linked glycan (1 site)"/>
</dbReference>
<dbReference type="iPTMnet" id="Q9NVA1"/>
<dbReference type="PhosphoSitePlus" id="Q9NVA1"/>
<dbReference type="SwissPalm" id="Q9NVA1"/>
<dbReference type="BioMuta" id="UQCC1"/>
<dbReference type="DMDM" id="306526265"/>
<dbReference type="jPOST" id="Q9NVA1"/>
<dbReference type="MassIVE" id="Q9NVA1"/>
<dbReference type="PaxDb" id="9606-ENSP00000363506"/>
<dbReference type="PeptideAtlas" id="Q9NVA1"/>
<dbReference type="ProteomicsDB" id="82766">
    <molecule id="Q9NVA1-1"/>
</dbReference>
<dbReference type="ProteomicsDB" id="82767">
    <molecule id="Q9NVA1-2"/>
</dbReference>
<dbReference type="ProteomicsDB" id="82768">
    <molecule id="Q9NVA1-3"/>
</dbReference>
<dbReference type="ProteomicsDB" id="82769">
    <molecule id="Q9NVA1-4"/>
</dbReference>
<dbReference type="ProteomicsDB" id="82770">
    <molecule id="Q9NVA1-5"/>
</dbReference>
<dbReference type="Pumba" id="Q9NVA1"/>
<dbReference type="Antibodypedia" id="26044">
    <property type="antibodies" value="37 antibodies from 13 providers"/>
</dbReference>
<dbReference type="DNASU" id="55245"/>
<dbReference type="Ensembl" id="ENST00000349714.9">
    <molecule id="Q9NVA1-4"/>
    <property type="protein sequence ID" value="ENSP00000335364.6"/>
    <property type="gene ID" value="ENSG00000101019.22"/>
</dbReference>
<dbReference type="Ensembl" id="ENST00000374380.6">
    <molecule id="Q9NVA1-5"/>
    <property type="protein sequence ID" value="ENSP00000363501.2"/>
    <property type="gene ID" value="ENSG00000101019.22"/>
</dbReference>
<dbReference type="Ensembl" id="ENST00000374384.6">
    <molecule id="Q9NVA1-2"/>
    <property type="protein sequence ID" value="ENSP00000363505.2"/>
    <property type="gene ID" value="ENSG00000101019.22"/>
</dbReference>
<dbReference type="Ensembl" id="ENST00000374385.10">
    <molecule id="Q9NVA1-1"/>
    <property type="protein sequence ID" value="ENSP00000363506.5"/>
    <property type="gene ID" value="ENSG00000101019.22"/>
</dbReference>
<dbReference type="GeneID" id="55245"/>
<dbReference type="KEGG" id="hsa:55245"/>
<dbReference type="MANE-Select" id="ENST00000374385.10">
    <property type="protein sequence ID" value="ENSP00000363506.5"/>
    <property type="RefSeq nucleotide sequence ID" value="NM_018244.5"/>
    <property type="RefSeq protein sequence ID" value="NP_060714.3"/>
</dbReference>
<dbReference type="UCSC" id="uc002xcd.4">
    <molecule id="Q9NVA1-1"/>
    <property type="organism name" value="human"/>
</dbReference>
<dbReference type="AGR" id="HGNC:15891"/>
<dbReference type="CTD" id="55245"/>
<dbReference type="DisGeNET" id="55245"/>
<dbReference type="GeneCards" id="UQCC1"/>
<dbReference type="HGNC" id="HGNC:15891">
    <property type="gene designation" value="UQCC1"/>
</dbReference>
<dbReference type="HPA" id="ENSG00000101019">
    <property type="expression patterns" value="Low tissue specificity"/>
</dbReference>
<dbReference type="MalaCards" id="UQCC1"/>
<dbReference type="MIM" id="611797">
    <property type="type" value="gene"/>
</dbReference>
<dbReference type="neXtProt" id="NX_Q9NVA1"/>
<dbReference type="OpenTargets" id="ENSG00000101019"/>
<dbReference type="PharmGKB" id="PA162408653"/>
<dbReference type="VEuPathDB" id="HostDB:ENSG00000101019"/>
<dbReference type="eggNOG" id="KOG2873">
    <property type="taxonomic scope" value="Eukaryota"/>
</dbReference>
<dbReference type="GeneTree" id="ENSGT00390000018118"/>
<dbReference type="InParanoid" id="Q9NVA1"/>
<dbReference type="OMA" id="TWFLITE"/>
<dbReference type="OrthoDB" id="4007at2759"/>
<dbReference type="PAN-GO" id="Q9NVA1">
    <property type="GO annotations" value="2 GO annotations based on evolutionary models"/>
</dbReference>
<dbReference type="PhylomeDB" id="Q9NVA1"/>
<dbReference type="TreeFam" id="TF313220"/>
<dbReference type="PathwayCommons" id="Q9NVA1"/>
<dbReference type="Reactome" id="R-HSA-9865881">
    <property type="pathway name" value="Complex III assembly"/>
</dbReference>
<dbReference type="SignaLink" id="Q9NVA1"/>
<dbReference type="BioGRID-ORCS" id="55245">
    <property type="hits" value="106 hits in 1144 CRISPR screens"/>
</dbReference>
<dbReference type="CD-CODE" id="91857CE7">
    <property type="entry name" value="Nucleolus"/>
</dbReference>
<dbReference type="ChiTaRS" id="UQCC1">
    <property type="organism name" value="human"/>
</dbReference>
<dbReference type="GeneWiki" id="UQCC"/>
<dbReference type="GenomeRNAi" id="55245"/>
<dbReference type="Pharos" id="Q9NVA1">
    <property type="development level" value="Tbio"/>
</dbReference>
<dbReference type="PRO" id="PR:Q9NVA1"/>
<dbReference type="Proteomes" id="UP000005640">
    <property type="component" value="Chromosome 20"/>
</dbReference>
<dbReference type="RNAct" id="Q9NVA1">
    <property type="molecule type" value="protein"/>
</dbReference>
<dbReference type="Bgee" id="ENSG00000101019">
    <property type="expression patterns" value="Expressed in gastrocnemius and 188 other cell types or tissues"/>
</dbReference>
<dbReference type="ExpressionAtlas" id="Q9NVA1">
    <property type="expression patterns" value="baseline and differential"/>
</dbReference>
<dbReference type="GO" id="GO:0031410">
    <property type="term" value="C:cytoplasmic vesicle"/>
    <property type="evidence" value="ECO:0007669"/>
    <property type="project" value="UniProtKB-KW"/>
</dbReference>
<dbReference type="GO" id="GO:0005743">
    <property type="term" value="C:mitochondrial inner membrane"/>
    <property type="evidence" value="ECO:0000314"/>
    <property type="project" value="UniProtKB"/>
</dbReference>
<dbReference type="GO" id="GO:0005739">
    <property type="term" value="C:mitochondrion"/>
    <property type="evidence" value="ECO:0006056"/>
    <property type="project" value="FlyBase"/>
</dbReference>
<dbReference type="GO" id="GO:0034551">
    <property type="term" value="P:mitochondrial respiratory chain complex III assembly"/>
    <property type="evidence" value="ECO:0000314"/>
    <property type="project" value="UniProtKB"/>
</dbReference>
<dbReference type="InterPro" id="IPR021150">
    <property type="entry name" value="Ubiq_cyt_c_chap"/>
</dbReference>
<dbReference type="InterPro" id="IPR007129">
    <property type="entry name" value="Ubiqinol_cyt_c_chaperone_CPB3"/>
</dbReference>
<dbReference type="PANTHER" id="PTHR12184">
    <property type="entry name" value="UBIQUINOL-CYTOCHROME C REDUCTASE COMPLEX ASSEMBLY FACTOR 1 FAMILY MEMBER"/>
    <property type="match status" value="1"/>
</dbReference>
<dbReference type="PANTHER" id="PTHR12184:SF1">
    <property type="entry name" value="UBIQUINOL-CYTOCHROME-C REDUCTASE COMPLEX ASSEMBLY FACTOR 1"/>
    <property type="match status" value="1"/>
</dbReference>
<dbReference type="Pfam" id="PF03981">
    <property type="entry name" value="Ubiq_cyt_C_chap"/>
    <property type="match status" value="1"/>
</dbReference>
<keyword id="KW-0025">Alternative splicing</keyword>
<keyword id="KW-0968">Cytoplasmic vesicle</keyword>
<keyword id="KW-0472">Membrane</keyword>
<keyword id="KW-0496">Mitochondrion</keyword>
<keyword id="KW-0999">Mitochondrion inner membrane</keyword>
<keyword id="KW-1267">Proteomics identification</keyword>
<keyword id="KW-1185">Reference proteome</keyword>
<protein>
    <recommendedName>
        <fullName>Ubiquinol-cytochrome c reductase complex assembly factor 1</fullName>
    </recommendedName>
    <alternativeName>
        <fullName>Basic FGF-repressed Zic-binding protein</fullName>
        <shortName>bFGF-repressed Zic-binding protein</shortName>
        <shortName>bFZb</shortName>
    </alternativeName>
    <alternativeName>
        <fullName>Ubiquinol-cytochrome c reductase complex chaperone CBP3 homolog</fullName>
    </alternativeName>
</protein>